<keyword id="KW-0002">3D-structure</keyword>
<keyword id="KW-0456">Lyase</keyword>
<keyword id="KW-0556">Organic radical</keyword>
<keyword id="KW-1185">Reference proteome</keyword>
<proteinExistence type="evidence at protein level"/>
<sequence length="765" mass="85960">MTNRISRLKTALFANTREISLERALLYTASHRQTEGEPVILRRAKATAYILEHVEISIRDEELIAGNRTVKPRAGIMSPEMDPYWLLKELDQFPTRPQDRFAISEEDKRIYREELFPYWEKRSMKDFINGQMTDEVKAATNTQIFSINQTDKGQGHIIIDYPRLLNHGLGELVAQMQQHCQQQPENHFYQAALLLLEASQKHILRYAELAETMAANCTDAQRREELLTIAEISRHNAQHKPQTFWQACQLFWYMNIILQYESNASSLSLGRFDQYMLPFYQTSLTQGEDAAFLKELLESLWVKCNDIVLLRSTSSARYFAGFPTGYTALLGGLTENGRSAVNVLSFLCLDAYQSVQLPQPNLGVRTNALIDTPFLMKTAETIRFGTGIPQIFNDEVVVPAFLNRGVSLEDARDYSVVGCVELSIPGRTYGLHDIAMFNLLKVMEICLHENEGNAALTYEGLLEQIRAKISHYITLMVEGSNICDIGHRDWAPVPLLSSFISDCLEKGRDITDGGARYNFSGVQGIGIANLSDSLHALKGMVFEQQRLSFDELLSVLKANFATPEGEKVRARLINRFEKYGNDIDEVDNISAELLRHYCKEVEKYQNPRGGYFTPGSYTVSAHVPLGSVVGATPDGRFAGEQLADGGLSPMLGQDAQGPTAVLKSVSKLDNTLLSNGTLLNVKFTPATLEGEAGLRKLADFLRAFTQLKLQHIQFNVVNADTLREAQQRPQDYAGLVVRVAGYSAFFVELSKEIQDDIIRRTAHQL</sequence>
<name>GRE1_ECOLI</name>
<comment type="function">
    <text evidence="4">Probably shows dehydratase activity.</text>
</comment>
<comment type="miscellaneous">
    <text evidence="4">Contains a dehydratase motif that is predictive of enzyme function.</text>
</comment>
<comment type="similarity">
    <text evidence="3">Belongs to the glycyl radical enzyme (GRE) family.</text>
</comment>
<evidence type="ECO:0000255" key="1">
    <source>
        <dbReference type="PROSITE-ProRule" id="PRU00493"/>
    </source>
</evidence>
<evidence type="ECO:0000255" key="2">
    <source>
        <dbReference type="PROSITE-ProRule" id="PRU00887"/>
    </source>
</evidence>
<evidence type="ECO:0000305" key="3"/>
<evidence type="ECO:0000305" key="4">
    <source>
    </source>
</evidence>
<feature type="chain" id="PRO_0000166689" description="Probable dehydratase PflD">
    <location>
        <begin position="1"/>
        <end position="765"/>
    </location>
</feature>
<feature type="domain" description="PFL" evidence="2">
    <location>
        <begin position="3"/>
        <end position="637"/>
    </location>
</feature>
<feature type="domain" description="Glycine radical" evidence="1">
    <location>
        <begin position="645"/>
        <end position="765"/>
    </location>
</feature>
<feature type="modified residue" description="Glycine radical" evidence="1">
    <location>
        <position position="741"/>
    </location>
</feature>
<accession>P32674</accession>
<accession>Q2M8P6</accession>
<reference key="1">
    <citation type="journal article" date="1993" name="Nucleic Acids Res.">
        <title>Analysis of the Escherichia coli genome. IV. DNA sequence of the region from 89.2 to 92.8 minutes.</title>
        <authorList>
            <person name="Blattner F.R."/>
            <person name="Burland V.D."/>
            <person name="Plunkett G. III"/>
            <person name="Sofia H.J."/>
            <person name="Daniels D.L."/>
        </authorList>
    </citation>
    <scope>NUCLEOTIDE SEQUENCE [LARGE SCALE GENOMIC DNA]</scope>
    <source>
        <strain>K12 / MG1655 / ATCC 47076</strain>
    </source>
</reference>
<reference key="2">
    <citation type="journal article" date="1997" name="Science">
        <title>The complete genome sequence of Escherichia coli K-12.</title>
        <authorList>
            <person name="Blattner F.R."/>
            <person name="Plunkett G. III"/>
            <person name="Bloch C.A."/>
            <person name="Perna N.T."/>
            <person name="Burland V."/>
            <person name="Riley M."/>
            <person name="Collado-Vides J."/>
            <person name="Glasner J.D."/>
            <person name="Rode C.K."/>
            <person name="Mayhew G.F."/>
            <person name="Gregor J."/>
            <person name="Davis N.W."/>
            <person name="Kirkpatrick H.A."/>
            <person name="Goeden M.A."/>
            <person name="Rose D.J."/>
            <person name="Mau B."/>
            <person name="Shao Y."/>
        </authorList>
    </citation>
    <scope>NUCLEOTIDE SEQUENCE [LARGE SCALE GENOMIC DNA]</scope>
    <source>
        <strain>K12 / MG1655 / ATCC 47076</strain>
    </source>
</reference>
<reference key="3">
    <citation type="journal article" date="2006" name="Mol. Syst. Biol.">
        <title>Highly accurate genome sequences of Escherichia coli K-12 strains MG1655 and W3110.</title>
        <authorList>
            <person name="Hayashi K."/>
            <person name="Morooka N."/>
            <person name="Yamamoto Y."/>
            <person name="Fujita K."/>
            <person name="Isono K."/>
            <person name="Choi S."/>
            <person name="Ohtsubo E."/>
            <person name="Baba T."/>
            <person name="Wanner B.L."/>
            <person name="Mori H."/>
            <person name="Horiuchi T."/>
        </authorList>
    </citation>
    <scope>NUCLEOTIDE SEQUENCE [LARGE SCALE GENOMIC DNA]</scope>
    <source>
        <strain>K12 / W3110 / ATCC 27325 / DSM 5911</strain>
    </source>
</reference>
<reference key="4">
    <citation type="journal article" date="1995" name="Microbiology">
        <title>Novel phosphotransferase system genes revealed by bacterial genome analysis -- a gene cluster encoding a unique Enzyme I and the proteins of a fructose-like permease system.</title>
        <authorList>
            <person name="Reizer J."/>
            <person name="Reizer A."/>
            <person name="Saier M.H. Jr."/>
        </authorList>
    </citation>
    <scope>DISCUSSION OF SEQUENCE</scope>
</reference>
<reference key="5">
    <citation type="journal article" date="2017" name="Science">
        <title>A prominent glycyl radical enzyme in human gut microbiomes metabolizes trans-4-hydroxy-L-proline.</title>
        <authorList>
            <person name="Levin B.J."/>
            <person name="Huang Y.Y."/>
            <person name="Peck S.C."/>
            <person name="Wei Y."/>
            <person name="Martinez-Del Campo A."/>
            <person name="Marks J.A."/>
            <person name="Franzosa E.A."/>
            <person name="Huttenhower C."/>
            <person name="Balskus E.P."/>
        </authorList>
    </citation>
    <scope>PREDICTED FUNCTION</scope>
</reference>
<dbReference type="EC" id="4.2.1.-" evidence="3"/>
<dbReference type="EMBL" id="U00006">
    <property type="protein sequence ID" value="AAC43057.1"/>
    <property type="molecule type" value="Genomic_DNA"/>
</dbReference>
<dbReference type="EMBL" id="U00096">
    <property type="protein sequence ID" value="AAC76933.1"/>
    <property type="molecule type" value="Genomic_DNA"/>
</dbReference>
<dbReference type="EMBL" id="AP009048">
    <property type="protein sequence ID" value="BAE77360.1"/>
    <property type="molecule type" value="Genomic_DNA"/>
</dbReference>
<dbReference type="PIR" id="B65202">
    <property type="entry name" value="B65202"/>
</dbReference>
<dbReference type="RefSeq" id="NP_418386.1">
    <property type="nucleotide sequence ID" value="NC_000913.3"/>
</dbReference>
<dbReference type="RefSeq" id="WP_000184811.1">
    <property type="nucleotide sequence ID" value="NZ_SSZK01000014.1"/>
</dbReference>
<dbReference type="PDB" id="8YJO">
    <property type="method" value="X-ray"/>
    <property type="resolution" value="1.80 A"/>
    <property type="chains" value="A/B=1-765"/>
</dbReference>
<dbReference type="PDBsum" id="8YJO"/>
<dbReference type="SMR" id="P32674"/>
<dbReference type="BioGRID" id="4262065">
    <property type="interactions" value="6"/>
</dbReference>
<dbReference type="DIP" id="DIP-10469N"/>
<dbReference type="FunCoup" id="P32674">
    <property type="interactions" value="58"/>
</dbReference>
<dbReference type="IntAct" id="P32674">
    <property type="interactions" value="4"/>
</dbReference>
<dbReference type="STRING" id="511145.b3951"/>
<dbReference type="PaxDb" id="511145-b3951"/>
<dbReference type="EnsemblBacteria" id="AAC76933">
    <property type="protein sequence ID" value="AAC76933"/>
    <property type="gene ID" value="b3951"/>
</dbReference>
<dbReference type="GeneID" id="948454"/>
<dbReference type="KEGG" id="ecj:JW3923"/>
<dbReference type="KEGG" id="eco:b3951"/>
<dbReference type="KEGG" id="ecoc:C3026_21350"/>
<dbReference type="PATRIC" id="fig|1411691.4.peg.2754"/>
<dbReference type="EchoBASE" id="EB1854"/>
<dbReference type="eggNOG" id="COG1882">
    <property type="taxonomic scope" value="Bacteria"/>
</dbReference>
<dbReference type="HOGENOM" id="CLU_009096_0_1_6"/>
<dbReference type="InParanoid" id="P32674"/>
<dbReference type="OMA" id="TMTNHAG"/>
<dbReference type="OrthoDB" id="9803969at2"/>
<dbReference type="PhylomeDB" id="P32674"/>
<dbReference type="BioCyc" id="EcoCyc:EG11910-MONOMER"/>
<dbReference type="PRO" id="PR:P32674"/>
<dbReference type="Proteomes" id="UP000000625">
    <property type="component" value="Chromosome"/>
</dbReference>
<dbReference type="GO" id="GO:0005829">
    <property type="term" value="C:cytosol"/>
    <property type="evidence" value="ECO:0000318"/>
    <property type="project" value="GO_Central"/>
</dbReference>
<dbReference type="GO" id="GO:0016829">
    <property type="term" value="F:lyase activity"/>
    <property type="evidence" value="ECO:0007669"/>
    <property type="project" value="UniProtKB-KW"/>
</dbReference>
<dbReference type="CDD" id="cd01677">
    <property type="entry name" value="PFL2_DhaB_BssA"/>
    <property type="match status" value="1"/>
</dbReference>
<dbReference type="FunFam" id="3.20.70.20:FF:000012">
    <property type="entry name" value="Formate C-acetyltransferase 2"/>
    <property type="match status" value="1"/>
</dbReference>
<dbReference type="Gene3D" id="3.20.70.20">
    <property type="match status" value="1"/>
</dbReference>
<dbReference type="InterPro" id="IPR019777">
    <property type="entry name" value="Form_AcTrfase_GR_CS"/>
</dbReference>
<dbReference type="InterPro" id="IPR001150">
    <property type="entry name" value="Gly_radical"/>
</dbReference>
<dbReference type="InterPro" id="IPR051215">
    <property type="entry name" value="GRE"/>
</dbReference>
<dbReference type="InterPro" id="IPR010098">
    <property type="entry name" value="PFL2/GDeHydtase_fam"/>
</dbReference>
<dbReference type="InterPro" id="IPR004184">
    <property type="entry name" value="PFL_dom"/>
</dbReference>
<dbReference type="NCBIfam" id="TIGR01774">
    <property type="entry name" value="PFL2-3"/>
    <property type="match status" value="1"/>
</dbReference>
<dbReference type="NCBIfam" id="NF007437">
    <property type="entry name" value="PRK09983.1"/>
    <property type="match status" value="1"/>
</dbReference>
<dbReference type="PANTHER" id="PTHR43641:SF3">
    <property type="entry name" value="DEHYDRATASE PFLD-RELATED"/>
    <property type="match status" value="1"/>
</dbReference>
<dbReference type="PANTHER" id="PTHR43641">
    <property type="entry name" value="FORMATE ACETYLTRANSFERASE 3-RELATED"/>
    <property type="match status" value="1"/>
</dbReference>
<dbReference type="Pfam" id="PF01228">
    <property type="entry name" value="Gly_radical"/>
    <property type="match status" value="1"/>
</dbReference>
<dbReference type="Pfam" id="PF02901">
    <property type="entry name" value="PFL-like"/>
    <property type="match status" value="1"/>
</dbReference>
<dbReference type="SUPFAM" id="SSF51998">
    <property type="entry name" value="PFL-like glycyl radical enzymes"/>
    <property type="match status" value="1"/>
</dbReference>
<dbReference type="PROSITE" id="PS00850">
    <property type="entry name" value="GLY_RADICAL_1"/>
    <property type="match status" value="1"/>
</dbReference>
<dbReference type="PROSITE" id="PS51149">
    <property type="entry name" value="GLY_RADICAL_2"/>
    <property type="match status" value="1"/>
</dbReference>
<dbReference type="PROSITE" id="PS51554">
    <property type="entry name" value="PFL"/>
    <property type="match status" value="1"/>
</dbReference>
<gene>
    <name type="primary">pflD</name>
    <name type="synonym">yijL</name>
    <name type="ordered locus">b3951</name>
    <name type="ordered locus">JW3923</name>
</gene>
<protein>
    <recommendedName>
        <fullName evidence="3">Probable dehydratase PflD</fullName>
        <ecNumber evidence="3">4.2.1.-</ecNumber>
    </recommendedName>
</protein>
<organism>
    <name type="scientific">Escherichia coli (strain K12)</name>
    <dbReference type="NCBI Taxonomy" id="83333"/>
    <lineage>
        <taxon>Bacteria</taxon>
        <taxon>Pseudomonadati</taxon>
        <taxon>Pseudomonadota</taxon>
        <taxon>Gammaproteobacteria</taxon>
        <taxon>Enterobacterales</taxon>
        <taxon>Enterobacteriaceae</taxon>
        <taxon>Escherichia</taxon>
    </lineage>
</organism>